<dbReference type="EC" id="7.1.2.2" evidence="1"/>
<dbReference type="EMBL" id="BA000043">
    <property type="protein sequence ID" value="BAD77645.1"/>
    <property type="molecule type" value="Genomic_DNA"/>
</dbReference>
<dbReference type="RefSeq" id="WP_011232827.1">
    <property type="nucleotide sequence ID" value="NC_006510.1"/>
</dbReference>
<dbReference type="PDB" id="4XD7">
    <property type="method" value="X-ray"/>
    <property type="resolution" value="3.90 A"/>
    <property type="chains" value="A/B/C=1-502"/>
</dbReference>
<dbReference type="PDBsum" id="4XD7"/>
<dbReference type="BMRB" id="Q5KUJ1"/>
<dbReference type="SMR" id="Q5KUJ1"/>
<dbReference type="STRING" id="235909.GK3360"/>
<dbReference type="GeneID" id="32065244"/>
<dbReference type="KEGG" id="gka:GK3360"/>
<dbReference type="eggNOG" id="COG0056">
    <property type="taxonomic scope" value="Bacteria"/>
</dbReference>
<dbReference type="HOGENOM" id="CLU_010091_2_1_9"/>
<dbReference type="Proteomes" id="UP000001172">
    <property type="component" value="Chromosome"/>
</dbReference>
<dbReference type="GO" id="GO:0005886">
    <property type="term" value="C:plasma membrane"/>
    <property type="evidence" value="ECO:0007669"/>
    <property type="project" value="UniProtKB-SubCell"/>
</dbReference>
<dbReference type="GO" id="GO:0045259">
    <property type="term" value="C:proton-transporting ATP synthase complex"/>
    <property type="evidence" value="ECO:0007669"/>
    <property type="project" value="UniProtKB-KW"/>
</dbReference>
<dbReference type="GO" id="GO:0043531">
    <property type="term" value="F:ADP binding"/>
    <property type="evidence" value="ECO:0007669"/>
    <property type="project" value="TreeGrafter"/>
</dbReference>
<dbReference type="GO" id="GO:0005524">
    <property type="term" value="F:ATP binding"/>
    <property type="evidence" value="ECO:0007669"/>
    <property type="project" value="UniProtKB-UniRule"/>
</dbReference>
<dbReference type="GO" id="GO:0046933">
    <property type="term" value="F:proton-transporting ATP synthase activity, rotational mechanism"/>
    <property type="evidence" value="ECO:0007669"/>
    <property type="project" value="UniProtKB-UniRule"/>
</dbReference>
<dbReference type="CDD" id="cd18113">
    <property type="entry name" value="ATP-synt_F1_alpha_C"/>
    <property type="match status" value="1"/>
</dbReference>
<dbReference type="CDD" id="cd18116">
    <property type="entry name" value="ATP-synt_F1_alpha_N"/>
    <property type="match status" value="1"/>
</dbReference>
<dbReference type="CDD" id="cd01132">
    <property type="entry name" value="F1-ATPase_alpha_CD"/>
    <property type="match status" value="1"/>
</dbReference>
<dbReference type="FunFam" id="1.20.150.20:FF:000001">
    <property type="entry name" value="ATP synthase subunit alpha"/>
    <property type="match status" value="1"/>
</dbReference>
<dbReference type="FunFam" id="2.40.30.20:FF:000001">
    <property type="entry name" value="ATP synthase subunit alpha"/>
    <property type="match status" value="1"/>
</dbReference>
<dbReference type="FunFam" id="3.40.50.300:FF:000002">
    <property type="entry name" value="ATP synthase subunit alpha"/>
    <property type="match status" value="1"/>
</dbReference>
<dbReference type="Gene3D" id="2.40.30.20">
    <property type="match status" value="1"/>
</dbReference>
<dbReference type="Gene3D" id="1.20.150.20">
    <property type="entry name" value="ATP synthase alpha/beta chain, C-terminal domain"/>
    <property type="match status" value="1"/>
</dbReference>
<dbReference type="Gene3D" id="3.40.50.300">
    <property type="entry name" value="P-loop containing nucleotide triphosphate hydrolases"/>
    <property type="match status" value="1"/>
</dbReference>
<dbReference type="HAMAP" id="MF_01346">
    <property type="entry name" value="ATP_synth_alpha_bact"/>
    <property type="match status" value="1"/>
</dbReference>
<dbReference type="InterPro" id="IPR023366">
    <property type="entry name" value="ATP_synth_asu-like_sf"/>
</dbReference>
<dbReference type="InterPro" id="IPR000793">
    <property type="entry name" value="ATP_synth_asu_C"/>
</dbReference>
<dbReference type="InterPro" id="IPR038376">
    <property type="entry name" value="ATP_synth_asu_C_sf"/>
</dbReference>
<dbReference type="InterPro" id="IPR033732">
    <property type="entry name" value="ATP_synth_F1_a_nt-bd_dom"/>
</dbReference>
<dbReference type="InterPro" id="IPR005294">
    <property type="entry name" value="ATP_synth_F1_asu"/>
</dbReference>
<dbReference type="InterPro" id="IPR020003">
    <property type="entry name" value="ATPase_a/bsu_AS"/>
</dbReference>
<dbReference type="InterPro" id="IPR004100">
    <property type="entry name" value="ATPase_F1/V1/A1_a/bsu_N"/>
</dbReference>
<dbReference type="InterPro" id="IPR036121">
    <property type="entry name" value="ATPase_F1/V1/A1_a/bsu_N_sf"/>
</dbReference>
<dbReference type="InterPro" id="IPR000194">
    <property type="entry name" value="ATPase_F1/V1/A1_a/bsu_nucl-bd"/>
</dbReference>
<dbReference type="InterPro" id="IPR027417">
    <property type="entry name" value="P-loop_NTPase"/>
</dbReference>
<dbReference type="NCBIfam" id="TIGR00962">
    <property type="entry name" value="atpA"/>
    <property type="match status" value="1"/>
</dbReference>
<dbReference type="NCBIfam" id="NF009884">
    <property type="entry name" value="PRK13343.1"/>
    <property type="match status" value="1"/>
</dbReference>
<dbReference type="PANTHER" id="PTHR48082">
    <property type="entry name" value="ATP SYNTHASE SUBUNIT ALPHA, MITOCHONDRIAL"/>
    <property type="match status" value="1"/>
</dbReference>
<dbReference type="PANTHER" id="PTHR48082:SF2">
    <property type="entry name" value="ATP SYNTHASE SUBUNIT ALPHA, MITOCHONDRIAL"/>
    <property type="match status" value="1"/>
</dbReference>
<dbReference type="Pfam" id="PF00006">
    <property type="entry name" value="ATP-synt_ab"/>
    <property type="match status" value="1"/>
</dbReference>
<dbReference type="Pfam" id="PF00306">
    <property type="entry name" value="ATP-synt_ab_C"/>
    <property type="match status" value="1"/>
</dbReference>
<dbReference type="Pfam" id="PF02874">
    <property type="entry name" value="ATP-synt_ab_N"/>
    <property type="match status" value="1"/>
</dbReference>
<dbReference type="PIRSF" id="PIRSF039088">
    <property type="entry name" value="F_ATPase_subunit_alpha"/>
    <property type="match status" value="1"/>
</dbReference>
<dbReference type="SUPFAM" id="SSF47917">
    <property type="entry name" value="C-terminal domain of alpha and beta subunits of F1 ATP synthase"/>
    <property type="match status" value="1"/>
</dbReference>
<dbReference type="SUPFAM" id="SSF50615">
    <property type="entry name" value="N-terminal domain of alpha and beta subunits of F1 ATP synthase"/>
    <property type="match status" value="1"/>
</dbReference>
<dbReference type="SUPFAM" id="SSF52540">
    <property type="entry name" value="P-loop containing nucleoside triphosphate hydrolases"/>
    <property type="match status" value="1"/>
</dbReference>
<dbReference type="PROSITE" id="PS00152">
    <property type="entry name" value="ATPASE_ALPHA_BETA"/>
    <property type="match status" value="1"/>
</dbReference>
<keyword id="KW-0002">3D-structure</keyword>
<keyword id="KW-0066">ATP synthesis</keyword>
<keyword id="KW-0067">ATP-binding</keyword>
<keyword id="KW-1003">Cell membrane</keyword>
<keyword id="KW-0139">CF(1)</keyword>
<keyword id="KW-0375">Hydrogen ion transport</keyword>
<keyword id="KW-0406">Ion transport</keyword>
<keyword id="KW-0472">Membrane</keyword>
<keyword id="KW-0547">Nucleotide-binding</keyword>
<keyword id="KW-1185">Reference proteome</keyword>
<keyword id="KW-1278">Translocase</keyword>
<keyword id="KW-0813">Transport</keyword>
<organism>
    <name type="scientific">Geobacillus kaustophilus (strain HTA426)</name>
    <dbReference type="NCBI Taxonomy" id="235909"/>
    <lineage>
        <taxon>Bacteria</taxon>
        <taxon>Bacillati</taxon>
        <taxon>Bacillota</taxon>
        <taxon>Bacilli</taxon>
        <taxon>Bacillales</taxon>
        <taxon>Anoxybacillaceae</taxon>
        <taxon>Geobacillus</taxon>
        <taxon>Geobacillus thermoleovorans group</taxon>
    </lineage>
</organism>
<comment type="function">
    <text evidence="1">Produces ATP from ADP in the presence of a proton gradient across the membrane. The alpha chain is a regulatory subunit.</text>
</comment>
<comment type="catalytic activity">
    <reaction evidence="1">
        <text>ATP + H2O + 4 H(+)(in) = ADP + phosphate + 5 H(+)(out)</text>
        <dbReference type="Rhea" id="RHEA:57720"/>
        <dbReference type="ChEBI" id="CHEBI:15377"/>
        <dbReference type="ChEBI" id="CHEBI:15378"/>
        <dbReference type="ChEBI" id="CHEBI:30616"/>
        <dbReference type="ChEBI" id="CHEBI:43474"/>
        <dbReference type="ChEBI" id="CHEBI:456216"/>
        <dbReference type="EC" id="7.1.2.2"/>
    </reaction>
</comment>
<comment type="subunit">
    <text evidence="1">F-type ATPases have 2 components, CF(1) - the catalytic core - and CF(0) - the membrane proton channel. CF(1) has five subunits: alpha(3), beta(3), gamma(1), delta(1), epsilon(1). CF(0) has three main subunits: a(1), b(2) and c(9-12). The alpha and beta chains form an alternating ring which encloses part of the gamma chain. CF(1) is attached to CF(0) by a central stalk formed by the gamma and epsilon chains, while a peripheral stalk is formed by the delta and b chains.</text>
</comment>
<comment type="subcellular location">
    <subcellularLocation>
        <location evidence="1">Cell membrane</location>
        <topology evidence="1">Peripheral membrane protein</topology>
    </subcellularLocation>
</comment>
<comment type="similarity">
    <text evidence="1">Belongs to the ATPase alpha/beta chains family.</text>
</comment>
<protein>
    <recommendedName>
        <fullName evidence="1">ATP synthase subunit alpha</fullName>
        <ecNumber evidence="1">7.1.2.2</ecNumber>
    </recommendedName>
    <alternativeName>
        <fullName evidence="1">ATP synthase F1 sector subunit alpha</fullName>
    </alternativeName>
    <alternativeName>
        <fullName evidence="1">F-ATPase subunit alpha</fullName>
    </alternativeName>
</protein>
<feature type="chain" id="PRO_0000238253" description="ATP synthase subunit alpha">
    <location>
        <begin position="1"/>
        <end position="502"/>
    </location>
</feature>
<feature type="region of interest" description="Disordered" evidence="2">
    <location>
        <begin position="115"/>
        <end position="137"/>
    </location>
</feature>
<feature type="binding site" evidence="1">
    <location>
        <begin position="169"/>
        <end position="176"/>
    </location>
    <ligand>
        <name>ATP</name>
        <dbReference type="ChEBI" id="CHEBI:30616"/>
    </ligand>
</feature>
<feature type="site" description="Required for activity" evidence="1">
    <location>
        <position position="362"/>
    </location>
</feature>
<gene>
    <name evidence="1" type="primary">atpA</name>
    <name type="ordered locus">GK3360</name>
</gene>
<name>ATPA_GEOKA</name>
<sequence length="502" mass="54842">MSIRAEEISALIKQQIENYESQIQVSDVGTVIQVGDGIARAHGLDNVMSGELVEFANGVMGMALNLEENNVGIVILGPYTGIKEGDEVRRTGRIMEVPVGEALIGRVVNPLGQPVDGLGPVETTETRPIESPAPGVMDRRSVHEPLQTGIKAIDALVPIGRGQRELIIGDRQTGKTSVAIDTIINQKDQNMICIYVAIGQKESTVRTVVETLRKHGALDYTIVVTASASQPAPLLFLAPYAGVAMGEYFMYKGQHVLVVYDDLSKQAAAYRELSLLLRRPPGREAYPGDIFYLHSRLLERAAKLSDAKGGGSLTALPFVETQAGDISAYIPTNVISITDGQIFLQSDLFFSGVRPAINAGLSVSRVGGAAQIKAMKKVAGTLRLDLAAYRELEAFAQFGSDLDKATQAKLARGARTVEVLKQDLHQPIPVEKQVLIIYALTRGFLDDIPVEDVRRFEKEFYLWLDQNGQHLLEHIRTTKDLPNEDDLNKAIEAFKKTFVVSQ</sequence>
<accession>Q5KUJ1</accession>
<proteinExistence type="evidence at protein level"/>
<reference key="1">
    <citation type="journal article" date="2004" name="Nucleic Acids Res.">
        <title>Thermoadaptation trait revealed by the genome sequence of thermophilic Geobacillus kaustophilus.</title>
        <authorList>
            <person name="Takami H."/>
            <person name="Takaki Y."/>
            <person name="Chee G.-J."/>
            <person name="Nishi S."/>
            <person name="Shimamura S."/>
            <person name="Suzuki H."/>
            <person name="Matsui S."/>
            <person name="Uchiyama I."/>
        </authorList>
    </citation>
    <scope>NUCLEOTIDE SEQUENCE [LARGE SCALE GENOMIC DNA]</scope>
    <source>
        <strain>HTA426</strain>
    </source>
</reference>
<evidence type="ECO:0000255" key="1">
    <source>
        <dbReference type="HAMAP-Rule" id="MF_01346"/>
    </source>
</evidence>
<evidence type="ECO:0000256" key="2">
    <source>
        <dbReference type="SAM" id="MobiDB-lite"/>
    </source>
</evidence>